<feature type="chain" id="PRO_0000446005" description="Alpha-ketoglutarate-dependent xanthine dioxygenase xanA">
    <location>
        <begin position="1"/>
        <end position="370"/>
    </location>
</feature>
<feature type="binding site" evidence="1">
    <location>
        <position position="107"/>
    </location>
    <ligand>
        <name>substrate</name>
    </ligand>
</feature>
<feature type="binding site" evidence="1 5">
    <location>
        <position position="149"/>
    </location>
    <ligand>
        <name>Fe cation</name>
        <dbReference type="ChEBI" id="CHEBI:24875"/>
        <note>catalytic</note>
    </ligand>
</feature>
<feature type="binding site" evidence="1 5">
    <location>
        <position position="151"/>
    </location>
    <ligand>
        <name>Fe cation</name>
        <dbReference type="ChEBI" id="CHEBI:24875"/>
        <note>catalytic</note>
    </ligand>
</feature>
<feature type="binding site" evidence="1">
    <location>
        <position position="195"/>
    </location>
    <ligand>
        <name>2-oxoglutarate</name>
        <dbReference type="ChEBI" id="CHEBI:16810"/>
    </ligand>
</feature>
<feature type="binding site" evidence="1">
    <location>
        <position position="325"/>
    </location>
    <ligand>
        <name>2-oxoglutarate</name>
        <dbReference type="ChEBI" id="CHEBI:16810"/>
    </ligand>
</feature>
<feature type="binding site" evidence="1 5">
    <location>
        <position position="340"/>
    </location>
    <ligand>
        <name>Fe cation</name>
        <dbReference type="ChEBI" id="CHEBI:24875"/>
        <note>catalytic</note>
    </ligand>
</feature>
<feature type="binding site" evidence="1">
    <location>
        <position position="352"/>
    </location>
    <ligand>
        <name>2-oxoglutarate</name>
        <dbReference type="ChEBI" id="CHEBI:16810"/>
    </ligand>
</feature>
<feature type="mutagenesis site" description="Leads to elevated ferroxidase activity in the absence of substrates." evidence="5">
    <original>Q</original>
    <variation>A</variation>
    <location>
        <position position="101"/>
    </location>
</feature>
<feature type="mutagenesis site" description="Affects the binding of 2-oxoglutarate." evidence="5">
    <original>K</original>
    <variation>A</variation>
    <location>
        <position position="122"/>
    </location>
</feature>
<feature type="mutagenesis site" description="Exhibits relatively enhanced activity and affects the inhibition by 6,8-dihydroxypurine." evidence="5">
    <original>E</original>
    <variation>A</variation>
    <location>
        <position position="137"/>
    </location>
</feature>
<feature type="mutagenesis site" description="Exhibits relatively enhanced activity and affects the inhibition by 6,8-dihydroxypurine." evidence="5">
    <original>D</original>
    <variation>A</variation>
    <location>
        <position position="138"/>
    </location>
</feature>
<feature type="mutagenesis site" description="Impairs catalytic activity." evidence="5">
    <original>H</original>
    <variation>A</variation>
    <location>
        <position position="149"/>
    </location>
</feature>
<feature type="mutagenesis site" description="Impairs catalytic activity." evidence="5">
    <original>D</original>
    <variation>A</variation>
    <location>
        <position position="151"/>
    </location>
</feature>
<feature type="mutagenesis site" description="In xanA1; impairs catalytic activity." evidence="2">
    <original>A</original>
    <variation>D</variation>
    <location>
        <position position="167"/>
    </location>
</feature>
<feature type="mutagenesis site" description="Exhibits only 0.17% of the wild-type enzyme activity." evidence="5">
    <original>H</original>
    <variation>A</variation>
    <location>
        <position position="340"/>
    </location>
</feature>
<feature type="mutagenesis site" description="Leads to elevated ferroxidase activity in the absence of substrates and affects the inhibition by 6,8-dihydroxypurine." evidence="5">
    <original>Q</original>
    <variation>A</variation>
    <location>
        <position position="356"/>
    </location>
</feature>
<feature type="mutagenesis site" description="Exhibits relatively enhanced activity, resistance to thiol-specific inhibitors such as DTNB or iodoacetamide, and elevated ferroxidase activity in the absence of substrates." evidence="5">
    <original>C</original>
    <variation>A</variation>
    <location>
        <position position="357"/>
    </location>
</feature>
<feature type="mutagenesis site" description="Exhibits a 23-fold decrease in kcat/Km and affects the inhibition by 6,8-dihydroxypurine." evidence="5">
    <original>N</original>
    <variation>A</variation>
    <location>
        <position position="358"/>
    </location>
</feature>
<dbReference type="EC" id="1.14.11.48" evidence="2 4 5"/>
<dbReference type="EMBL" id="AACD01000007">
    <property type="protein sequence ID" value="EAA66587.1"/>
    <property type="status" value="ALT_SEQ"/>
    <property type="molecule type" value="Genomic_DNA"/>
</dbReference>
<dbReference type="EMBL" id="BN001308">
    <property type="protein sequence ID" value="CBF89386.1"/>
    <property type="status" value="ALT_SEQ"/>
    <property type="molecule type" value="Genomic_DNA"/>
</dbReference>
<dbReference type="RefSeq" id="XP_658092.1">
    <property type="nucleotide sequence ID" value="XM_653000.1"/>
</dbReference>
<dbReference type="SMR" id="C8VSZ2"/>
<dbReference type="STRING" id="227321.C8VSZ2"/>
<dbReference type="EnsemblFungi" id="CBF89386">
    <property type="protein sequence ID" value="CBF89386"/>
    <property type="gene ID" value="ANIA_10081"/>
</dbReference>
<dbReference type="GeneID" id="2876265"/>
<dbReference type="KEGG" id="ani:ANIA_10081"/>
<dbReference type="VEuPathDB" id="FungiDB:AN10081"/>
<dbReference type="eggNOG" id="ENOG502QS34">
    <property type="taxonomic scope" value="Eukaryota"/>
</dbReference>
<dbReference type="HOGENOM" id="CLU_399564_0_0_1"/>
<dbReference type="InParanoid" id="C8VSZ2"/>
<dbReference type="OrthoDB" id="93019at2759"/>
<dbReference type="Proteomes" id="UP000000560">
    <property type="component" value="Chromosome VIII"/>
</dbReference>
<dbReference type="GO" id="GO:0005829">
    <property type="term" value="C:cytosol"/>
    <property type="evidence" value="ECO:0007669"/>
    <property type="project" value="UniProtKB-SubCell"/>
</dbReference>
<dbReference type="GO" id="GO:0097641">
    <property type="term" value="F:alpha-ketoglutarate-dependent xanthine dioxygenase activity"/>
    <property type="evidence" value="ECO:0007669"/>
    <property type="project" value="RHEA"/>
</dbReference>
<dbReference type="GO" id="GO:0046872">
    <property type="term" value="F:metal ion binding"/>
    <property type="evidence" value="ECO:0007669"/>
    <property type="project" value="UniProtKB-KW"/>
</dbReference>
<dbReference type="FunFam" id="3.60.130.10:FF:000034">
    <property type="entry name" value="Alpha-ketoglutarate-dependent xanthine dioxygenase xanA"/>
    <property type="match status" value="1"/>
</dbReference>
<dbReference type="Gene3D" id="3.60.130.10">
    <property type="entry name" value="Clavaminate synthase-like"/>
    <property type="match status" value="1"/>
</dbReference>
<dbReference type="InterPro" id="IPR042098">
    <property type="entry name" value="TauD-like_sf"/>
</dbReference>
<dbReference type="InterPro" id="IPR003819">
    <property type="entry name" value="TauD/TfdA-like"/>
</dbReference>
<dbReference type="InterPro" id="IPR051178">
    <property type="entry name" value="TfdA_dioxygenase"/>
</dbReference>
<dbReference type="PANTHER" id="PTHR43779:SF2">
    <property type="entry name" value="ALPHA-KETOGLUTARATE-DEPENDENT XANTHINE DIOXYGENASE XAN1"/>
    <property type="match status" value="1"/>
</dbReference>
<dbReference type="PANTHER" id="PTHR43779">
    <property type="entry name" value="DIOXYGENASE RV0097-RELATED"/>
    <property type="match status" value="1"/>
</dbReference>
<dbReference type="Pfam" id="PF02668">
    <property type="entry name" value="TauD"/>
    <property type="match status" value="1"/>
</dbReference>
<dbReference type="SUPFAM" id="SSF51197">
    <property type="entry name" value="Clavaminate synthase-like"/>
    <property type="match status" value="1"/>
</dbReference>
<name>XANA_EMENI</name>
<evidence type="ECO:0000250" key="1">
    <source>
        <dbReference type="UniProtKB" id="P37610"/>
    </source>
</evidence>
<evidence type="ECO:0000269" key="2">
    <source>
    </source>
</evidence>
<evidence type="ECO:0000269" key="3">
    <source>
    </source>
</evidence>
<evidence type="ECO:0000269" key="4">
    <source>
    </source>
</evidence>
<evidence type="ECO:0000269" key="5">
    <source>
    </source>
</evidence>
<evidence type="ECO:0000269" key="6">
    <source>
    </source>
</evidence>
<evidence type="ECO:0000303" key="7">
    <source>
    </source>
</evidence>
<evidence type="ECO:0000305" key="8"/>
<gene>
    <name evidence="7" type="primary">xanA</name>
    <name type="ORF">AN0488</name>
    <name type="ORF">ANIA_10081</name>
</gene>
<accession>C8VSZ2</accession>
<accession>Q5BG42</accession>
<comment type="function">
    <text evidence="2 4 5">Alpha-ketoglutarate-dependent xanthine dioxygenase is a non-heme mononuclear Fe(2+) enzyme that decarboxylates alpha-ketoglutarate to succinate and CO(2) while hydroxylating xanthine to generate uric acid (PubMed:15948966, PubMed:17429948, PubMed:18036331). Allows xanthine utilization as a nitrogen source (PubMed:15948966). Whereas xanA is highly specific for xanthine, alpha-ketoadipic acid can replace alpha-ketoglutarate as a cosubstrate (PubMed:17429948). Exhibits ferroxidase activity in the absence of substrates (PubMed:18036331).</text>
</comment>
<comment type="catalytic activity">
    <reaction evidence="2 4 5">
        <text>xanthine + 2-oxoglutarate + O2 = urate + succinate + CO2</text>
        <dbReference type="Rhea" id="RHEA:43120"/>
        <dbReference type="ChEBI" id="CHEBI:15379"/>
        <dbReference type="ChEBI" id="CHEBI:16526"/>
        <dbReference type="ChEBI" id="CHEBI:16810"/>
        <dbReference type="ChEBI" id="CHEBI:17712"/>
        <dbReference type="ChEBI" id="CHEBI:17775"/>
        <dbReference type="ChEBI" id="CHEBI:30031"/>
        <dbReference type="EC" id="1.14.11.48"/>
    </reaction>
    <physiologicalReaction direction="left-to-right" evidence="2 4 5">
        <dbReference type="Rhea" id="RHEA:43121"/>
    </physiologicalReaction>
</comment>
<comment type="cofactor">
    <cofactor evidence="4 5">
        <name>Fe(2+)</name>
        <dbReference type="ChEBI" id="CHEBI:29033"/>
    </cofactor>
    <text evidence="1">Binds 1 Fe(2+) ion per subunit.</text>
</comment>
<comment type="activity regulation">
    <text evidence="4 5">Cu(2+) and Zn(2+) completely inhibit the xanthine dioxygenase activity, whereas Co(2+), Mn(2+), and Ni(2+) partially inhibit the activity. The inactive metal ions are presumed to compete for the Fe(2+)-binding site (PubMed:17429948). N-oxalylglycine (NOG), a known inhibitor of several Fe(2+)/alpha-ketoglutarate-dependent dioxygenase family members, competes with alpha-ketoglutarate and provides a Ki of 0.12 uM for inhibition (PubMed:17429948). 6,8-dihydroxypurine acts as a slow-binding competitive inhibitor (PubMed:18036331). The thiol-specific inhibitors 5,5'-dithiobis(2-nitrobenzoic acid) (DTNB) and iodoacetamide, inhibit also the catalytic activity (PubMed:18036331).</text>
</comment>
<comment type="biophysicochemical properties">
    <kinetics>
        <KM evidence="4 5">31.1 uM for 2-oxoglutarate (at 25 degrees Celsius)</KM>
        <KM evidence="2 4">50 uM for 2-oxoglutarate (at 30 degrees Celsius)</KM>
        <KM evidence="4 5">45.2 uM for xanthine (at 25 degrees Celsius)</KM>
        <KM evidence="2 4">46 uM for xanthine (at 30 degrees Celsius)</KM>
        <KM evidence="4">0.16 mM for alpha-ketoadipic acid (at 25 degrees Celsius)</KM>
        <KM evidence="5">0.4 mM for 9-methylxanthine (at 25 degrees Celsius)</KM>
    </kinetics>
    <phDependence>
        <text evidence="2 4">Optimum pH is 6.5 to 7.4.</text>
    </phDependence>
</comment>
<comment type="subcellular location">
    <subcellularLocation>
        <location evidence="6">Cytoplasm</location>
        <location evidence="6">Cytosol</location>
    </subcellularLocation>
</comment>
<comment type="induction">
    <text evidence="3">Expression is induced by uric acid which is mediated by the transcription factor UaY, together with the AreA GATA factor (PubMed:17367381). The promoter contains 4 A/CGATAR areA-binding sites (PubMed:17367381).</text>
</comment>
<comment type="PTM">
    <text evidence="4">Glycosylated (PubMed:17429948). Is subject to both N- and O-linked glycosylation (PubMed:17429948).</text>
</comment>
<comment type="PTM">
    <text evidence="4">Phosphorylated.</text>
</comment>
<comment type="similarity">
    <text evidence="8">Belongs to the TfdA dioxygenase family.</text>
</comment>
<comment type="sequence caution" evidence="8">
    <conflict type="erroneous gene model prediction">
        <sequence resource="EMBL-CDS" id="CBF89386"/>
    </conflict>
</comment>
<comment type="sequence caution" evidence="8">
    <conflict type="erroneous gene model prediction">
        <sequence resource="EMBL-CDS" id="EAA66587"/>
    </conflict>
</comment>
<protein>
    <recommendedName>
        <fullName evidence="7">Alpha-ketoglutarate-dependent xanthine dioxygenase xanA</fullName>
        <ecNumber evidence="2 4 5">1.14.11.48</ecNumber>
    </recommendedName>
</protein>
<sequence>MPAITVKPLTPPAGSAIDFGAVITDVDLEHLTDGDFSTIRSALYTHLVVVLKNQHQLTPKAQYELTRRFDPSATQYGHGKTLDAKRSILHPDLKTIPHQPQVQVIGHGFIDSYEGLENITLKHPHHRTFHRDPIPQEDDYDSTRFYRWHIDAALYGLNPPIVTTLLAVKVPGGRRQTVRYDDGSGETMDVPLGTTAFASGERMFELLSEEDKEFALSSRVEYAPHPYIWMSPARSLPTGLGLHSDDLELPLSELPPIDESAIQILPMVWKNPATGKPALQIHPSAVRKIHCGDGTVIDDLKKVREIAYKLQRPAISPQYVYAHDWEEGDLVLFHNRGVLHSVVGAFGEGEVRLFRQCNLAAGEGVVPYRE</sequence>
<keyword id="KW-0963">Cytoplasm</keyword>
<keyword id="KW-0223">Dioxygenase</keyword>
<keyword id="KW-0408">Iron</keyword>
<keyword id="KW-0479">Metal-binding</keyword>
<keyword id="KW-0560">Oxidoreductase</keyword>
<keyword id="KW-1185">Reference proteome</keyword>
<proteinExistence type="evidence at protein level"/>
<reference key="1">
    <citation type="journal article" date="2005" name="Nature">
        <title>Sequencing of Aspergillus nidulans and comparative analysis with A. fumigatus and A. oryzae.</title>
        <authorList>
            <person name="Galagan J.E."/>
            <person name="Calvo S.E."/>
            <person name="Cuomo C."/>
            <person name="Ma L.-J."/>
            <person name="Wortman J.R."/>
            <person name="Batzoglou S."/>
            <person name="Lee S.-I."/>
            <person name="Bastuerkmen M."/>
            <person name="Spevak C.C."/>
            <person name="Clutterbuck J."/>
            <person name="Kapitonov V."/>
            <person name="Jurka J."/>
            <person name="Scazzocchio C."/>
            <person name="Farman M.L."/>
            <person name="Butler J."/>
            <person name="Purcell S."/>
            <person name="Harris S."/>
            <person name="Braus G.H."/>
            <person name="Draht O."/>
            <person name="Busch S."/>
            <person name="D'Enfert C."/>
            <person name="Bouchier C."/>
            <person name="Goldman G.H."/>
            <person name="Bell-Pedersen D."/>
            <person name="Griffiths-Jones S."/>
            <person name="Doonan J.H."/>
            <person name="Yu J."/>
            <person name="Vienken K."/>
            <person name="Pain A."/>
            <person name="Freitag M."/>
            <person name="Selker E.U."/>
            <person name="Archer D.B."/>
            <person name="Penalva M.A."/>
            <person name="Oakley B.R."/>
            <person name="Momany M."/>
            <person name="Tanaka T."/>
            <person name="Kumagai T."/>
            <person name="Asai K."/>
            <person name="Machida M."/>
            <person name="Nierman W.C."/>
            <person name="Denning D.W."/>
            <person name="Caddick M.X."/>
            <person name="Hynes M."/>
            <person name="Paoletti M."/>
            <person name="Fischer R."/>
            <person name="Miller B.L."/>
            <person name="Dyer P.S."/>
            <person name="Sachs M.S."/>
            <person name="Osmani S.A."/>
            <person name="Birren B.W."/>
        </authorList>
    </citation>
    <scope>NUCLEOTIDE SEQUENCE [LARGE SCALE GENOMIC DNA]</scope>
    <source>
        <strain>FGSC A4 / ATCC 38163 / CBS 112.46 / NRRL 194 / M139</strain>
    </source>
</reference>
<reference key="2">
    <citation type="journal article" date="2009" name="Fungal Genet. Biol.">
        <title>The 2008 update of the Aspergillus nidulans genome annotation: a community effort.</title>
        <authorList>
            <person name="Wortman J.R."/>
            <person name="Gilsenan J.M."/>
            <person name="Joardar V."/>
            <person name="Deegan J."/>
            <person name="Clutterbuck J."/>
            <person name="Andersen M.R."/>
            <person name="Archer D."/>
            <person name="Bencina M."/>
            <person name="Braus G."/>
            <person name="Coutinho P."/>
            <person name="von Dohren H."/>
            <person name="Doonan J."/>
            <person name="Driessen A.J."/>
            <person name="Durek P."/>
            <person name="Espeso E."/>
            <person name="Fekete E."/>
            <person name="Flipphi M."/>
            <person name="Estrada C.G."/>
            <person name="Geysens S."/>
            <person name="Goldman G."/>
            <person name="de Groot P.W."/>
            <person name="Hansen K."/>
            <person name="Harris S.D."/>
            <person name="Heinekamp T."/>
            <person name="Helmstaedt K."/>
            <person name="Henrissat B."/>
            <person name="Hofmann G."/>
            <person name="Homan T."/>
            <person name="Horio T."/>
            <person name="Horiuchi H."/>
            <person name="James S."/>
            <person name="Jones M."/>
            <person name="Karaffa L."/>
            <person name="Karanyi Z."/>
            <person name="Kato M."/>
            <person name="Keller N."/>
            <person name="Kelly D.E."/>
            <person name="Kiel J.A."/>
            <person name="Kim J.M."/>
            <person name="van der Klei I.J."/>
            <person name="Klis F.M."/>
            <person name="Kovalchuk A."/>
            <person name="Krasevec N."/>
            <person name="Kubicek C.P."/>
            <person name="Liu B."/>
            <person name="Maccabe A."/>
            <person name="Meyer V."/>
            <person name="Mirabito P."/>
            <person name="Miskei M."/>
            <person name="Mos M."/>
            <person name="Mullins J."/>
            <person name="Nelson D.R."/>
            <person name="Nielsen J."/>
            <person name="Oakley B.R."/>
            <person name="Osmani S.A."/>
            <person name="Pakula T."/>
            <person name="Paszewski A."/>
            <person name="Paulsen I."/>
            <person name="Pilsyk S."/>
            <person name="Pocsi I."/>
            <person name="Punt P.J."/>
            <person name="Ram A.F."/>
            <person name="Ren Q."/>
            <person name="Robellet X."/>
            <person name="Robson G."/>
            <person name="Seiboth B."/>
            <person name="van Solingen P."/>
            <person name="Specht T."/>
            <person name="Sun J."/>
            <person name="Taheri-Talesh N."/>
            <person name="Takeshita N."/>
            <person name="Ussery D."/>
            <person name="vanKuyk P.A."/>
            <person name="Visser H."/>
            <person name="van de Vondervoort P.J."/>
            <person name="de Vries R.P."/>
            <person name="Walton J."/>
            <person name="Xiang X."/>
            <person name="Xiong Y."/>
            <person name="Zeng A.P."/>
            <person name="Brandt B.W."/>
            <person name="Cornell M.J."/>
            <person name="van den Hondel C.A."/>
            <person name="Visser J."/>
            <person name="Oliver S.G."/>
            <person name="Turner G."/>
        </authorList>
    </citation>
    <scope>GENOME REANNOTATION</scope>
    <source>
        <strain>FGSC A4 / ATCC 38163 / CBS 112.46 / NRRL 194 / M139</strain>
    </source>
</reference>
<reference key="3">
    <citation type="journal article" date="2005" name="Mol. Microbiol.">
        <title>Convergent evolution of hydroxylation mechanisms in the fungal kingdom: molybdenum cofactor-independent hydroxylation of xanthine via alpha-ketoglutarate-dependent dioxygenases.</title>
        <authorList>
            <person name="Cultrone A."/>
            <person name="Scazzocchio C."/>
            <person name="Rochet M."/>
            <person name="Montero-Moran G."/>
            <person name="Drevet C."/>
            <person name="Fernandez-Martin R."/>
        </authorList>
    </citation>
    <scope>FUNCTION</scope>
    <scope>CATALYTIC ACTIVITY</scope>
    <scope>BIOPHYSICOCHEMICAL PROPERTIES</scope>
    <scope>MUTAGENESIS OF ALA-167</scope>
</reference>
<reference key="4">
    <citation type="journal article" date="2007" name="Biochemistry">
        <title>Purification and characterization of the FeII- and alpha-ketoglutarate-dependent xanthine hydroxylase from Aspergillus nidulans.</title>
        <authorList>
            <person name="Montero-Moran G.M."/>
            <person name="Li M."/>
            <person name="Rendon-Huerta E."/>
            <person name="Jourdan F."/>
            <person name="Lowe D.J."/>
            <person name="Stumpff-Kane A.W."/>
            <person name="Feig M."/>
            <person name="Scazzocchio C."/>
            <person name="Hausinger R.P."/>
        </authorList>
    </citation>
    <scope>FUNCTION</scope>
    <scope>CATALYTIC ACTIVITY</scope>
    <scope>BIOPHYSICOCHEMICAL PROPERTIES</scope>
    <scope>COFACTOR</scope>
    <scope>ACTIVITY REGULATION</scope>
    <scope>SUBSTRATE SPECIFICITY</scope>
    <scope>PHOSPHORYLATION</scope>
    <scope>GLYCOSYLATION</scope>
</reference>
<reference key="5">
    <citation type="journal article" date="2007" name="Mol. Microbiol.">
        <title>The tightly regulated promoter of the xanA gene of Aspergillus nidulans is included in a helitron.</title>
        <authorList>
            <person name="Cultrone A."/>
            <person name="Dominguez Y.R."/>
            <person name="Drevet C."/>
            <person name="Scazzocchio C."/>
            <person name="Fernandez-Martin R."/>
        </authorList>
    </citation>
    <scope>INDUCTION</scope>
</reference>
<reference key="6">
    <citation type="journal article" date="2008" name="Arch. Biochem. Biophys.">
        <title>Characterization of active site variants of xanthine hydroxylase from Aspergillus nidulans.</title>
        <authorList>
            <person name="Li M."/>
            <person name="Mueller T.A."/>
            <person name="Fraser B.A."/>
            <person name="Hausinger R.P."/>
        </authorList>
    </citation>
    <scope>FUNCTION</scope>
    <scope>CATALYTIC ACTIVITY</scope>
    <scope>COFACTOR</scope>
    <scope>ACTIVITY REGULATION</scope>
    <scope>SUBSTRATE SPECIFICITY</scope>
    <scope>MUTAGENESIS OF GLN-101; LYS-122; GLU-137; ASP-138; HIS-149; ASP-151; HIS-340; GLN-356; CYS-357 AND ASN-358</scope>
</reference>
<reference key="7">
    <citation type="journal article" date="2014" name="Fungal Genet. Biol.">
        <title>Purine utilization proteins in the Eurotiales: cellular compartmentalization, phylogenetic conservation and divergence.</title>
        <authorList>
            <person name="Galanopoulou K."/>
            <person name="Scazzocchio C."/>
            <person name="Galinou M.E."/>
            <person name="Liu W."/>
            <person name="Borbolis F."/>
            <person name="Karachaliou M."/>
            <person name="Oestreicher N."/>
            <person name="Hatzinikolaou D.G."/>
            <person name="Diallinas G."/>
            <person name="Amillis S."/>
        </authorList>
    </citation>
    <scope>SUBCELLULAR LOCATION</scope>
</reference>
<organism>
    <name type="scientific">Emericella nidulans (strain FGSC A4 / ATCC 38163 / CBS 112.46 / NRRL 194 / M139)</name>
    <name type="common">Aspergillus nidulans</name>
    <dbReference type="NCBI Taxonomy" id="227321"/>
    <lineage>
        <taxon>Eukaryota</taxon>
        <taxon>Fungi</taxon>
        <taxon>Dikarya</taxon>
        <taxon>Ascomycota</taxon>
        <taxon>Pezizomycotina</taxon>
        <taxon>Eurotiomycetes</taxon>
        <taxon>Eurotiomycetidae</taxon>
        <taxon>Eurotiales</taxon>
        <taxon>Aspergillaceae</taxon>
        <taxon>Aspergillus</taxon>
        <taxon>Aspergillus subgen. Nidulantes</taxon>
    </lineage>
</organism>